<reference key="1">
    <citation type="journal article" date="2006" name="Nature">
        <title>The DNA sequence and biological annotation of human chromosome 1.</title>
        <authorList>
            <person name="Gregory S.G."/>
            <person name="Barlow K.F."/>
            <person name="McLay K.E."/>
            <person name="Kaul R."/>
            <person name="Swarbreck D."/>
            <person name="Dunham A."/>
            <person name="Scott C.E."/>
            <person name="Howe K.L."/>
            <person name="Woodfine K."/>
            <person name="Spencer C.C.A."/>
            <person name="Jones M.C."/>
            <person name="Gillson C."/>
            <person name="Searle S."/>
            <person name="Zhou Y."/>
            <person name="Kokocinski F."/>
            <person name="McDonald L."/>
            <person name="Evans R."/>
            <person name="Phillips K."/>
            <person name="Atkinson A."/>
            <person name="Cooper R."/>
            <person name="Jones C."/>
            <person name="Hall R.E."/>
            <person name="Andrews T.D."/>
            <person name="Lloyd C."/>
            <person name="Ainscough R."/>
            <person name="Almeida J.P."/>
            <person name="Ambrose K.D."/>
            <person name="Anderson F."/>
            <person name="Andrew R.W."/>
            <person name="Ashwell R.I.S."/>
            <person name="Aubin K."/>
            <person name="Babbage A.K."/>
            <person name="Bagguley C.L."/>
            <person name="Bailey J."/>
            <person name="Beasley H."/>
            <person name="Bethel G."/>
            <person name="Bird C.P."/>
            <person name="Bray-Allen S."/>
            <person name="Brown J.Y."/>
            <person name="Brown A.J."/>
            <person name="Buckley D."/>
            <person name="Burton J."/>
            <person name="Bye J."/>
            <person name="Carder C."/>
            <person name="Chapman J.C."/>
            <person name="Clark S.Y."/>
            <person name="Clarke G."/>
            <person name="Clee C."/>
            <person name="Cobley V."/>
            <person name="Collier R.E."/>
            <person name="Corby N."/>
            <person name="Coville G.J."/>
            <person name="Davies J."/>
            <person name="Deadman R."/>
            <person name="Dunn M."/>
            <person name="Earthrowl M."/>
            <person name="Ellington A.G."/>
            <person name="Errington H."/>
            <person name="Frankish A."/>
            <person name="Frankland J."/>
            <person name="French L."/>
            <person name="Garner P."/>
            <person name="Garnett J."/>
            <person name="Gay L."/>
            <person name="Ghori M.R.J."/>
            <person name="Gibson R."/>
            <person name="Gilby L.M."/>
            <person name="Gillett W."/>
            <person name="Glithero R.J."/>
            <person name="Grafham D.V."/>
            <person name="Griffiths C."/>
            <person name="Griffiths-Jones S."/>
            <person name="Grocock R."/>
            <person name="Hammond S."/>
            <person name="Harrison E.S.I."/>
            <person name="Hart E."/>
            <person name="Haugen E."/>
            <person name="Heath P.D."/>
            <person name="Holmes S."/>
            <person name="Holt K."/>
            <person name="Howden P.J."/>
            <person name="Hunt A.R."/>
            <person name="Hunt S.E."/>
            <person name="Hunter G."/>
            <person name="Isherwood J."/>
            <person name="James R."/>
            <person name="Johnson C."/>
            <person name="Johnson D."/>
            <person name="Joy A."/>
            <person name="Kay M."/>
            <person name="Kershaw J.K."/>
            <person name="Kibukawa M."/>
            <person name="Kimberley A.M."/>
            <person name="King A."/>
            <person name="Knights A.J."/>
            <person name="Lad H."/>
            <person name="Laird G."/>
            <person name="Lawlor S."/>
            <person name="Leongamornlert D.A."/>
            <person name="Lloyd D.M."/>
            <person name="Loveland J."/>
            <person name="Lovell J."/>
            <person name="Lush M.J."/>
            <person name="Lyne R."/>
            <person name="Martin S."/>
            <person name="Mashreghi-Mohammadi M."/>
            <person name="Matthews L."/>
            <person name="Matthews N.S.W."/>
            <person name="McLaren S."/>
            <person name="Milne S."/>
            <person name="Mistry S."/>
            <person name="Moore M.J.F."/>
            <person name="Nickerson T."/>
            <person name="O'Dell C.N."/>
            <person name="Oliver K."/>
            <person name="Palmeiri A."/>
            <person name="Palmer S.A."/>
            <person name="Parker A."/>
            <person name="Patel D."/>
            <person name="Pearce A.V."/>
            <person name="Peck A.I."/>
            <person name="Pelan S."/>
            <person name="Phelps K."/>
            <person name="Phillimore B.J."/>
            <person name="Plumb R."/>
            <person name="Rajan J."/>
            <person name="Raymond C."/>
            <person name="Rouse G."/>
            <person name="Saenphimmachak C."/>
            <person name="Sehra H.K."/>
            <person name="Sheridan E."/>
            <person name="Shownkeen R."/>
            <person name="Sims S."/>
            <person name="Skuce C.D."/>
            <person name="Smith M."/>
            <person name="Steward C."/>
            <person name="Subramanian S."/>
            <person name="Sycamore N."/>
            <person name="Tracey A."/>
            <person name="Tromans A."/>
            <person name="Van Helmond Z."/>
            <person name="Wall M."/>
            <person name="Wallis J.M."/>
            <person name="White S."/>
            <person name="Whitehead S.L."/>
            <person name="Wilkinson J.E."/>
            <person name="Willey D.L."/>
            <person name="Williams H."/>
            <person name="Wilming L."/>
            <person name="Wray P.W."/>
            <person name="Wu Z."/>
            <person name="Coulson A."/>
            <person name="Vaudin M."/>
            <person name="Sulston J.E."/>
            <person name="Durbin R.M."/>
            <person name="Hubbard T."/>
            <person name="Wooster R."/>
            <person name="Dunham I."/>
            <person name="Carter N.P."/>
            <person name="McVean G."/>
            <person name="Ross M.T."/>
            <person name="Harrow J."/>
            <person name="Olson M.V."/>
            <person name="Beck S."/>
            <person name="Rogers J."/>
            <person name="Bentley D.R."/>
        </authorList>
    </citation>
    <scope>NUCLEOTIDE SEQUENCE [LARGE SCALE GENOMIC DNA]</scope>
</reference>
<reference key="2">
    <citation type="submission" date="2006-12" db="EMBL/GenBank/DDBJ databases">
        <authorList>
            <person name="Mural R.J."/>
            <person name="Istrail S."/>
            <person name="Sutton G.G."/>
            <person name="Florea L."/>
            <person name="Halpern A.L."/>
            <person name="Mobarry C.M."/>
            <person name="Lippert R."/>
            <person name="Walenz B."/>
            <person name="Shatkay H."/>
            <person name="Dew I."/>
            <person name="Miller J.R."/>
            <person name="Flanigan M.J."/>
            <person name="Edwards N.J."/>
            <person name="Bolanos R."/>
            <person name="Fasulo D."/>
            <person name="Halldorsson B.V."/>
            <person name="Hannenhalli S."/>
            <person name="Turner R."/>
            <person name="Yooseph S."/>
            <person name="Lu F."/>
            <person name="Nusskern D.R."/>
            <person name="Shue B.C."/>
            <person name="Zheng X.H."/>
            <person name="Zhong F."/>
            <person name="Delcher A.L."/>
            <person name="Huson D.H."/>
            <person name="Kravitz S.A."/>
            <person name="Mouchard L."/>
            <person name="Reinert K."/>
            <person name="Remington K.A."/>
            <person name="Clark A.G."/>
            <person name="Waterman M.S."/>
            <person name="Eichler E.E."/>
            <person name="Adams M.D."/>
            <person name="Hunkapiller M.W."/>
            <person name="Myers E.W."/>
            <person name="Venter J.C."/>
        </authorList>
    </citation>
    <scope>NUCLEOTIDE SEQUENCE [LARGE SCALE GENOMIC DNA]</scope>
</reference>
<reference key="3">
    <citation type="journal article" date="2004" name="Genome Res.">
        <title>The status, quality, and expansion of the NIH full-length cDNA project: the Mammalian Gene Collection (MGC).</title>
        <authorList>
            <consortium name="The MGC Project Team"/>
        </authorList>
    </citation>
    <scope>NUCLEOTIDE SEQUENCE [LARGE SCALE MRNA] (ISOFORMS 3 AND 4)</scope>
    <source>
        <tissue>Placenta</tissue>
    </source>
</reference>
<reference key="4">
    <citation type="journal article" date="1997" name="DNA Res.">
        <title>Prediction of the coding sequences of unidentified human genes. VIII. 78 new cDNA clones from brain which code for large proteins in vitro.</title>
        <authorList>
            <person name="Ishikawa K."/>
            <person name="Nagase T."/>
            <person name="Nakajima D."/>
            <person name="Seki N."/>
            <person name="Ohira M."/>
            <person name="Miyajima N."/>
            <person name="Tanaka A."/>
            <person name="Kotani H."/>
            <person name="Nomura N."/>
            <person name="Ohara O."/>
        </authorList>
    </citation>
    <scope>NUCLEOTIDE SEQUENCE [LARGE SCALE MRNA] OF 279-1548</scope>
    <scope>VARIANT ILE-452</scope>
    <source>
        <tissue>Brain</tissue>
    </source>
</reference>
<reference key="5">
    <citation type="journal article" date="1999" name="Cytogenet. Cell Genet.">
        <title>Assignment of ZNF262 to human chromosome band 1p34--&gt;p32 by in situ hybridization.</title>
        <authorList>
            <person name="Sohal J."/>
            <person name="Chase A."/>
            <person name="Goldman J.M."/>
            <person name="Cross N.C.P."/>
        </authorList>
    </citation>
    <scope>IDENTIFICATION</scope>
</reference>
<reference key="6">
    <citation type="journal article" date="1999" name="Genomics">
        <title>Cloning and mapping of members of the MYM family.</title>
        <authorList>
            <person name="Smedley D."/>
            <person name="Hamoudi R."/>
            <person name="Lu Y.-J."/>
            <person name="Cooper C."/>
            <person name="Shipley J."/>
        </authorList>
    </citation>
    <scope>TISSUE SPECIFICITY</scope>
</reference>
<reference key="7">
    <citation type="journal article" date="2002" name="J. Biol. Chem.">
        <title>Cell death inhibiting RNA (CDIR) derived from a 3'-untranslated region binds AUF1 and heat shock protein 27.</title>
        <authorList>
            <person name="Shchors K."/>
            <person name="Yehiely F."/>
            <person name="Kular R.K."/>
            <person name="Kotlo K.U."/>
            <person name="Brewer G."/>
            <person name="Deiss L.P."/>
        </authorList>
    </citation>
    <scope>IDENTIFICATION OF UTR</scope>
</reference>
<reference key="8">
    <citation type="journal article" date="2004" name="Cell Cycle">
        <title>Cell death inhibiting RNA (CDIR) modulates IFN-gamma-stimulated sensitization to Fas/CD95/Apo-1 and TRAIL/Apo-2L-induced apoptosis.</title>
        <authorList>
            <person name="Shchors K."/>
            <person name="Yehiely F."/>
            <person name="Deiss L.P."/>
        </authorList>
    </citation>
    <scope>IDENTIFICATION OF UTR</scope>
</reference>
<reference key="9">
    <citation type="journal article" date="2006" name="Cell">
        <title>Global, in vivo, and site-specific phosphorylation dynamics in signaling networks.</title>
        <authorList>
            <person name="Olsen J.V."/>
            <person name="Blagoev B."/>
            <person name="Gnad F."/>
            <person name="Macek B."/>
            <person name="Kumar C."/>
            <person name="Mortensen P."/>
            <person name="Mann M."/>
        </authorList>
    </citation>
    <scope>PHOSPHORYLATION [LARGE SCALE ANALYSIS] AT SER-122 AND SER-162</scope>
    <scope>IDENTIFICATION BY MASS SPECTROMETRY [LARGE SCALE ANALYSIS]</scope>
    <source>
        <tissue>Cervix carcinoma</tissue>
    </source>
</reference>
<reference key="10">
    <citation type="journal article" date="2007" name="Science">
        <title>ATM and ATR substrate analysis reveals extensive protein networks responsive to DNA damage.</title>
        <authorList>
            <person name="Matsuoka S."/>
            <person name="Ballif B.A."/>
            <person name="Smogorzewska A."/>
            <person name="McDonald E.R. III"/>
            <person name="Hurov K.E."/>
            <person name="Luo J."/>
            <person name="Bakalarski C.E."/>
            <person name="Zhao Z."/>
            <person name="Solimini N."/>
            <person name="Lerenthal Y."/>
            <person name="Shiloh Y."/>
            <person name="Gygi S.P."/>
            <person name="Elledge S.J."/>
        </authorList>
    </citation>
    <scope>PHOSPHORYLATION [LARGE SCALE ANALYSIS] AT SER-1256</scope>
    <scope>IDENTIFICATION BY MASS SPECTROMETRY [LARGE SCALE ANALYSIS]</scope>
    <source>
        <tissue>Embryonic kidney</tissue>
    </source>
</reference>
<reference key="11">
    <citation type="journal article" date="2008" name="Proc. Natl. Acad. Sci. U.S.A.">
        <title>A quantitative atlas of mitotic phosphorylation.</title>
        <authorList>
            <person name="Dephoure N."/>
            <person name="Zhou C."/>
            <person name="Villen J."/>
            <person name="Beausoleil S.A."/>
            <person name="Bakalarski C.E."/>
            <person name="Elledge S.J."/>
            <person name="Gygi S.P."/>
        </authorList>
    </citation>
    <scope>PHOSPHORYLATION [LARGE SCALE ANALYSIS] AT SER-122</scope>
    <scope>IDENTIFICATION BY MASS SPECTROMETRY [LARGE SCALE ANALYSIS]</scope>
    <source>
        <tissue>Cervix carcinoma</tissue>
    </source>
</reference>
<reference key="12">
    <citation type="journal article" date="2009" name="Anal. Chem.">
        <title>Lys-N and trypsin cover complementary parts of the phosphoproteome in a refined SCX-based approach.</title>
        <authorList>
            <person name="Gauci S."/>
            <person name="Helbig A.O."/>
            <person name="Slijper M."/>
            <person name="Krijgsveld J."/>
            <person name="Heck A.J."/>
            <person name="Mohammed S."/>
        </authorList>
    </citation>
    <scope>ACETYLATION [LARGE SCALE ANALYSIS] AT ALA-2</scope>
    <scope>CLEAVAGE OF INITIATOR METHIONINE [LARGE SCALE ANALYSIS]</scope>
    <scope>IDENTIFICATION BY MASS SPECTROMETRY [LARGE SCALE ANALYSIS]</scope>
</reference>
<reference key="13">
    <citation type="journal article" date="2010" name="Sci. Signal.">
        <title>Quantitative phosphoproteomics reveals widespread full phosphorylation site occupancy during mitosis.</title>
        <authorList>
            <person name="Olsen J.V."/>
            <person name="Vermeulen M."/>
            <person name="Santamaria A."/>
            <person name="Kumar C."/>
            <person name="Miller M.L."/>
            <person name="Jensen L.J."/>
            <person name="Gnad F."/>
            <person name="Cox J."/>
            <person name="Jensen T.S."/>
            <person name="Nigg E.A."/>
            <person name="Brunak S."/>
            <person name="Mann M."/>
        </authorList>
    </citation>
    <scope>PHOSPHORYLATION [LARGE SCALE ANALYSIS] AT THR-107; SER-110; SER-122 AND SER-1030</scope>
    <scope>IDENTIFICATION BY MASS SPECTROMETRY [LARGE SCALE ANALYSIS]</scope>
    <source>
        <tissue>Cervix carcinoma</tissue>
    </source>
</reference>
<reference key="14">
    <citation type="journal article" date="2011" name="BMC Biol.">
        <title>Identification and characterization of a set of conserved and new regulators of cytoskeletal organisation, cell morphology and migration.</title>
        <authorList>
            <person name="Bai S.W."/>
            <person name="Herrera-Abreu M.T."/>
            <person name="Rohn J.L."/>
            <person name="Racine V."/>
            <person name="Tajadura V."/>
            <person name="Suryavanshi N."/>
            <person name="Bechtel S."/>
            <person name="Wiemann S."/>
            <person name="Baum B."/>
            <person name="Ridley A.J."/>
        </authorList>
    </citation>
    <scope>FUNCTION</scope>
</reference>
<reference key="15">
    <citation type="journal article" date="2011" name="BMC Syst. Biol.">
        <title>Initial characterization of the human central proteome.</title>
        <authorList>
            <person name="Burkard T.R."/>
            <person name="Planyavsky M."/>
            <person name="Kaupe I."/>
            <person name="Breitwieser F.P."/>
            <person name="Buerckstuemmer T."/>
            <person name="Bennett K.L."/>
            <person name="Superti-Furga G."/>
            <person name="Colinge J."/>
        </authorList>
    </citation>
    <scope>IDENTIFICATION BY MASS SPECTROMETRY [LARGE SCALE ANALYSIS]</scope>
</reference>
<reference key="16">
    <citation type="journal article" date="2011" name="Sci. Signal.">
        <title>System-wide temporal characterization of the proteome and phosphoproteome of human embryonic stem cell differentiation.</title>
        <authorList>
            <person name="Rigbolt K.T."/>
            <person name="Prokhorova T.A."/>
            <person name="Akimov V."/>
            <person name="Henningsen J."/>
            <person name="Johansen P.T."/>
            <person name="Kratchmarova I."/>
            <person name="Kassem M."/>
            <person name="Mann M."/>
            <person name="Olsen J.V."/>
            <person name="Blagoev B."/>
        </authorList>
    </citation>
    <scope>PHOSPHORYLATION [LARGE SCALE ANALYSIS] AT SER-122; SER-1181; SER-1539; SER-1542 AND SER-1547</scope>
    <scope>IDENTIFICATION BY MASS SPECTROMETRY [LARGE SCALE ANALYSIS]</scope>
</reference>
<reference key="17">
    <citation type="journal article" date="2013" name="J. Proteome Res.">
        <title>Toward a comprehensive characterization of a human cancer cell phosphoproteome.</title>
        <authorList>
            <person name="Zhou H."/>
            <person name="Di Palma S."/>
            <person name="Preisinger C."/>
            <person name="Peng M."/>
            <person name="Polat A.N."/>
            <person name="Heck A.J."/>
            <person name="Mohammed S."/>
        </authorList>
    </citation>
    <scope>PHOSPHORYLATION [LARGE SCALE ANALYSIS] AT SER-110; SER-122; SER-162; SER-197; SER-242; SER-1064; SER-1071 AND SER-1181</scope>
    <scope>IDENTIFICATION BY MASS SPECTROMETRY [LARGE SCALE ANALYSIS]</scope>
    <source>
        <tissue>Cervix carcinoma</tissue>
        <tissue>Erythroleukemia</tissue>
    </source>
</reference>
<reference key="18">
    <citation type="journal article" date="2014" name="Nat. Struct. Mol. Biol.">
        <title>Uncovering global SUMOylation signaling networks in a site-specific manner.</title>
        <authorList>
            <person name="Hendriks I.A."/>
            <person name="D'Souza R.C."/>
            <person name="Yang B."/>
            <person name="Verlaan-de Vries M."/>
            <person name="Mann M."/>
            <person name="Vertegaal A.C."/>
        </authorList>
    </citation>
    <scope>SUMOYLATION [LARGE SCALE ANALYSIS] AT LYS-250; LYS-273 AND LYS-430</scope>
    <scope>IDENTIFICATION BY MASS SPECTROMETRY [LARGE SCALE ANALYSIS]</scope>
</reference>
<reference key="19">
    <citation type="journal article" date="2014" name="Proc. Natl. Acad. Sci. U.S.A.">
        <title>Mapping of SUMO sites and analysis of SUMOylation changes induced by external stimuli.</title>
        <authorList>
            <person name="Impens F."/>
            <person name="Radoshevich L."/>
            <person name="Cossart P."/>
            <person name="Ribet D."/>
        </authorList>
    </citation>
    <scope>SUMOYLATION [LARGE SCALE ANALYSIS] AT LYS-250 AND LYS-273</scope>
    <scope>IDENTIFICATION BY MASS SPECTROMETRY [LARGE SCALE ANALYSIS]</scope>
</reference>
<reference key="20">
    <citation type="journal article" date="2015" name="Cell Rep.">
        <title>SUMO-2 orchestrates chromatin modifiers in response to DNA damage.</title>
        <authorList>
            <person name="Hendriks I.A."/>
            <person name="Treffers L.W."/>
            <person name="Verlaan-de Vries M."/>
            <person name="Olsen J.V."/>
            <person name="Vertegaal A.C."/>
        </authorList>
    </citation>
    <scope>SUMOYLATION [LARGE SCALE ANALYSIS] AT LYS-149; LYS-250; LYS-273 AND LYS-430</scope>
    <scope>IDENTIFICATION BY MASS SPECTROMETRY [LARGE SCALE ANALYSIS]</scope>
</reference>
<reference key="21">
    <citation type="journal article" date="2015" name="Mol. Cell. Proteomics">
        <title>System-wide analysis of SUMOylation dynamics in response to replication stress reveals novel small ubiquitin-like modified target proteins and acceptor lysines relevant for genome stability.</title>
        <authorList>
            <person name="Xiao Z."/>
            <person name="Chang J.G."/>
            <person name="Hendriks I.A."/>
            <person name="Sigurdsson J.O."/>
            <person name="Olsen J.V."/>
            <person name="Vertegaal A.C."/>
        </authorList>
    </citation>
    <scope>SUMOYLATION [LARGE SCALE ANALYSIS] AT LYS-250 AND LYS-273</scope>
    <scope>IDENTIFICATION BY MASS SPECTROMETRY [LARGE SCALE ANALYSIS]</scope>
</reference>
<reference key="22">
    <citation type="journal article" date="2017" name="Nat. Struct. Mol. Biol.">
        <title>Site-specific mapping of the human SUMO proteome reveals co-modification with phosphorylation.</title>
        <authorList>
            <person name="Hendriks I.A."/>
            <person name="Lyon D."/>
            <person name="Young C."/>
            <person name="Jensen L.J."/>
            <person name="Vertegaal A.C."/>
            <person name="Nielsen M.L."/>
        </authorList>
    </citation>
    <scope>SUMOYLATION [LARGE SCALE ANALYSIS] AT LYS-140; LYS-149; LYS-195; LYS-201; LYS-232; LYS-250; LYS-260; LYS-271; LYS-273; LYS-289; LYS-327; LYS-400; LYS-428; LYS-430; LYS-1035; LYS-1061; LYS-1080; LYS-1127 AND LYS-1431</scope>
    <scope>IDENTIFICATION BY MASS SPECTROMETRY [LARGE SCALE ANALYSIS]</scope>
</reference>
<reference key="23">
    <citation type="journal article" date="2006" name="Science">
        <title>The consensus coding sequences of human breast and colorectal cancers.</title>
        <authorList>
            <person name="Sjoeblom T."/>
            <person name="Jones S."/>
            <person name="Wood L.D."/>
            <person name="Parsons D.W."/>
            <person name="Lin J."/>
            <person name="Barber T.D."/>
            <person name="Mandelker D."/>
            <person name="Leary R.J."/>
            <person name="Ptak J."/>
            <person name="Silliman N."/>
            <person name="Szabo S."/>
            <person name="Buckhaults P."/>
            <person name="Farrell C."/>
            <person name="Meeh P."/>
            <person name="Markowitz S.D."/>
            <person name="Willis J."/>
            <person name="Dawson D."/>
            <person name="Willson J.K.V."/>
            <person name="Gazdar A.F."/>
            <person name="Hartigan J."/>
            <person name="Wu L."/>
            <person name="Liu C."/>
            <person name="Parmigiani G."/>
            <person name="Park B.H."/>
            <person name="Bachman K.E."/>
            <person name="Papadopoulos N."/>
            <person name="Vogelstein B."/>
            <person name="Kinzler K.W."/>
            <person name="Velculescu V.E."/>
        </authorList>
    </citation>
    <scope>VARIANT [LARGE SCALE ANALYSIS] TRP-1410</scope>
</reference>
<proteinExistence type="evidence at protein level"/>
<gene>
    <name type="primary">ZMYM4</name>
    <name type="synonym">KIAA0425</name>
    <name type="synonym">ZNF262</name>
</gene>
<feature type="initiator methionine" description="Removed" evidence="11">
    <location>
        <position position="1"/>
    </location>
</feature>
<feature type="chain" id="PRO_0000299017" description="Zinc finger MYM-type protein 4">
    <location>
        <begin position="2"/>
        <end position="1548"/>
    </location>
</feature>
<feature type="zinc finger region" description="MYM-type 1">
    <location>
        <begin position="362"/>
        <end position="402"/>
    </location>
</feature>
<feature type="zinc finger region" description="MYM-type 2">
    <location>
        <begin position="414"/>
        <end position="457"/>
    </location>
</feature>
<feature type="zinc finger region" description="MYM-type 3">
    <location>
        <begin position="464"/>
        <end position="499"/>
    </location>
</feature>
<feature type="zinc finger region" description="MYM-type 4">
    <location>
        <begin position="510"/>
        <end position="544"/>
    </location>
</feature>
<feature type="zinc finger region" description="MYM-type 5">
    <location>
        <begin position="554"/>
        <end position="592"/>
    </location>
</feature>
<feature type="zinc finger region" description="MYM-type 6">
    <location>
        <begin position="600"/>
        <end position="631"/>
    </location>
</feature>
<feature type="zinc finger region" description="MYM-type 7">
    <location>
        <begin position="708"/>
        <end position="742"/>
    </location>
</feature>
<feature type="zinc finger region" description="MYM-type 8">
    <location>
        <begin position="749"/>
        <end position="788"/>
    </location>
</feature>
<feature type="zinc finger region" description="MYM-type 9">
    <location>
        <begin position="795"/>
        <end position="829"/>
    </location>
</feature>
<feature type="region of interest" description="Disordered" evidence="1">
    <location>
        <begin position="162"/>
        <end position="189"/>
    </location>
</feature>
<feature type="region of interest" description="Disordered" evidence="1">
    <location>
        <begin position="1124"/>
        <end position="1183"/>
    </location>
</feature>
<feature type="region of interest" description="Disordered" evidence="1">
    <location>
        <begin position="1231"/>
        <end position="1260"/>
    </location>
</feature>
<feature type="compositionally biased region" description="Basic and acidic residues" evidence="1">
    <location>
        <begin position="1124"/>
        <end position="1134"/>
    </location>
</feature>
<feature type="compositionally biased region" description="Basic residues" evidence="1">
    <location>
        <begin position="1160"/>
        <end position="1181"/>
    </location>
</feature>
<feature type="compositionally biased region" description="Polar residues" evidence="1">
    <location>
        <begin position="1237"/>
        <end position="1260"/>
    </location>
</feature>
<feature type="modified residue" description="N-acetylalanine" evidence="11">
    <location>
        <position position="2"/>
    </location>
</feature>
<feature type="modified residue" description="Phosphothreonine" evidence="12">
    <location>
        <position position="107"/>
    </location>
</feature>
<feature type="modified residue" description="Phosphoserine" evidence="12 14">
    <location>
        <position position="110"/>
    </location>
</feature>
<feature type="modified residue" description="Phosphoserine" evidence="8 10 12 13 14">
    <location>
        <position position="122"/>
    </location>
</feature>
<feature type="modified residue" description="Phosphoserine" evidence="8 14">
    <location>
        <position position="162"/>
    </location>
</feature>
<feature type="modified residue" description="Phosphoserine" evidence="14">
    <location>
        <position position="197"/>
    </location>
</feature>
<feature type="modified residue" description="Phosphoserine" evidence="14">
    <location>
        <position position="242"/>
    </location>
</feature>
<feature type="modified residue" description="Phosphoserine" evidence="12">
    <location>
        <position position="1030"/>
    </location>
</feature>
<feature type="modified residue" description="Phosphoserine" evidence="14">
    <location>
        <position position="1064"/>
    </location>
</feature>
<feature type="modified residue" description="Phosphoserine" evidence="14">
    <location>
        <position position="1071"/>
    </location>
</feature>
<feature type="modified residue" description="Phosphoserine" evidence="13 14">
    <location>
        <position position="1181"/>
    </location>
</feature>
<feature type="modified residue" description="Phosphoserine" evidence="9">
    <location>
        <position position="1256"/>
    </location>
</feature>
<feature type="modified residue" description="Phosphoserine" evidence="13">
    <location>
        <position position="1539"/>
    </location>
</feature>
<feature type="modified residue" description="Phosphoserine" evidence="13">
    <location>
        <position position="1542"/>
    </location>
</feature>
<feature type="modified residue" description="Phosphoserine" evidence="13">
    <location>
        <position position="1547"/>
    </location>
</feature>
<feature type="cross-link" description="Glycyl lysine isopeptide (Lys-Gly) (interchain with G-Cter in SUMO2)" evidence="19">
    <location>
        <position position="140"/>
    </location>
</feature>
<feature type="cross-link" description="Glycyl lysine isopeptide (Lys-Gly) (interchain with G-Cter in SUMO2)" evidence="18 19">
    <location>
        <position position="149"/>
    </location>
</feature>
<feature type="cross-link" description="Glycyl lysine isopeptide (Lys-Gly) (interchain with G-Cter in SUMO2)" evidence="19">
    <location>
        <position position="195"/>
    </location>
</feature>
<feature type="cross-link" description="Glycyl lysine isopeptide (Lys-Gly) (interchain with G-Cter in SUMO2)" evidence="19">
    <location>
        <position position="201"/>
    </location>
</feature>
<feature type="cross-link" description="Glycyl lysine isopeptide (Lys-Gly) (interchain with G-Cter in SUMO2)" evidence="19">
    <location>
        <position position="232"/>
    </location>
</feature>
<feature type="cross-link" description="Glycyl lysine isopeptide (Lys-Gly) (interchain with G-Cter in SUMO1); alternate" evidence="15">
    <location>
        <position position="250"/>
    </location>
</feature>
<feature type="cross-link" description="Glycyl lysine isopeptide (Lys-Gly) (interchain with G-Cter in SUMO2); alternate" evidence="15 16 17 18 19">
    <location>
        <position position="250"/>
    </location>
</feature>
<feature type="cross-link" description="Glycyl lysine isopeptide (Lys-Gly) (interchain with G-Cter in SUMO2)" evidence="19">
    <location>
        <position position="260"/>
    </location>
</feature>
<feature type="cross-link" description="Glycyl lysine isopeptide (Lys-Gly) (interchain with G-Cter in SUMO2)" evidence="19">
    <location>
        <position position="271"/>
    </location>
</feature>
<feature type="cross-link" description="Glycyl lysine isopeptide (Lys-Gly) (interchain with G-Cter in SUMO2)" evidence="15 16 17 18 19">
    <location>
        <position position="273"/>
    </location>
</feature>
<feature type="cross-link" description="Glycyl lysine isopeptide (Lys-Gly) (interchain with G-Cter in SUMO2)" evidence="19">
    <location>
        <position position="289"/>
    </location>
</feature>
<feature type="cross-link" description="Glycyl lysine isopeptide (Lys-Gly) (interchain with G-Cter in SUMO2)" evidence="19">
    <location>
        <position position="327"/>
    </location>
</feature>
<feature type="cross-link" description="Glycyl lysine isopeptide (Lys-Gly) (interchain with G-Cter in SUMO2)" evidence="19">
    <location>
        <position position="400"/>
    </location>
</feature>
<feature type="cross-link" description="Glycyl lysine isopeptide (Lys-Gly) (interchain with G-Cter in SUMO2)" evidence="19">
    <location>
        <position position="428"/>
    </location>
</feature>
<feature type="cross-link" description="Glycyl lysine isopeptide (Lys-Gly) (interchain with G-Cter in SUMO2)" evidence="16 18 19">
    <location>
        <position position="430"/>
    </location>
</feature>
<feature type="cross-link" description="Glycyl lysine isopeptide (Lys-Gly) (interchain with G-Cter in SUMO2)" evidence="19">
    <location>
        <position position="1035"/>
    </location>
</feature>
<feature type="cross-link" description="Glycyl lysine isopeptide (Lys-Gly) (interchain with G-Cter in SUMO2)" evidence="19">
    <location>
        <position position="1061"/>
    </location>
</feature>
<feature type="cross-link" description="Glycyl lysine isopeptide (Lys-Gly) (interchain with G-Cter in SUMO2)" evidence="19">
    <location>
        <position position="1080"/>
    </location>
</feature>
<feature type="cross-link" description="Glycyl lysine isopeptide (Lys-Gly) (interchain with G-Cter in SUMO2)" evidence="19">
    <location>
        <position position="1127"/>
    </location>
</feature>
<feature type="cross-link" description="Glycyl lysine isopeptide (Lys-Gly) (interchain with G-Cter in SUMO2)" evidence="19">
    <location>
        <position position="1431"/>
    </location>
</feature>
<feature type="splice variant" id="VSP_027512" description="In isoform 3." evidence="6">
    <location>
        <begin position="1"/>
        <end position="324"/>
    </location>
</feature>
<feature type="splice variant" id="VSP_027513" description="In isoform 4." evidence="6">
    <location>
        <begin position="1"/>
        <end position="32"/>
    </location>
</feature>
<feature type="splice variant" id="VSP_027514" description="In isoform 2." evidence="7">
    <location>
        <begin position="524"/>
        <end position="612"/>
    </location>
</feature>
<feature type="sequence variant" id="VAR_034764" description="In dbSNP:rs34924462." evidence="5">
    <original>V</original>
    <variation>I</variation>
    <location>
        <position position="452"/>
    </location>
</feature>
<feature type="sequence variant" id="VAR_035672" description="In a colorectal cancer sample; somatic mutation; dbSNP:rs191217255." evidence="3">
    <original>R</original>
    <variation>W</variation>
    <location>
        <position position="1410"/>
    </location>
</feature>
<feature type="sequence conflict" description="In Ref. 4; BAA24855." evidence="7" ref="4">
    <original>AQ</original>
    <variation>RT</variation>
    <location>
        <begin position="279"/>
        <end position="280"/>
    </location>
</feature>
<evidence type="ECO:0000256" key="1">
    <source>
        <dbReference type="SAM" id="MobiDB-lite"/>
    </source>
</evidence>
<evidence type="ECO:0000269" key="2">
    <source>
    </source>
</evidence>
<evidence type="ECO:0000269" key="3">
    <source>
    </source>
</evidence>
<evidence type="ECO:0000269" key="4">
    <source>
    </source>
</evidence>
<evidence type="ECO:0000269" key="5">
    <source>
    </source>
</evidence>
<evidence type="ECO:0000303" key="6">
    <source>
    </source>
</evidence>
<evidence type="ECO:0000305" key="7"/>
<evidence type="ECO:0007744" key="8">
    <source>
    </source>
</evidence>
<evidence type="ECO:0007744" key="9">
    <source>
    </source>
</evidence>
<evidence type="ECO:0007744" key="10">
    <source>
    </source>
</evidence>
<evidence type="ECO:0007744" key="11">
    <source>
    </source>
</evidence>
<evidence type="ECO:0007744" key="12">
    <source>
    </source>
</evidence>
<evidence type="ECO:0007744" key="13">
    <source>
    </source>
</evidence>
<evidence type="ECO:0007744" key="14">
    <source>
    </source>
</evidence>
<evidence type="ECO:0007744" key="15">
    <source>
    </source>
</evidence>
<evidence type="ECO:0007744" key="16">
    <source>
    </source>
</evidence>
<evidence type="ECO:0007744" key="17">
    <source>
    </source>
</evidence>
<evidence type="ECO:0007744" key="18">
    <source>
    </source>
</evidence>
<evidence type="ECO:0007744" key="19">
    <source>
    </source>
</evidence>
<sequence>MAEREVESGPRKRFEQKSGAVFDEIVENCGGIMDTEMSEDIDHNLTPTLDSMSYGMPNQTGSENSLLDEDDYFLNSGDLAGIPVVGSDNEDEQDFSSKDNLVSSIHTDDSLEVERRVTQHESDNENEIQIQNKLKKDFPKQFDQVSVFKSIRKDFSLVRENSKETFSGKEKNRDLTYEREKRLDKPHKDLDSRLKSSFFDKAANQVEETLHTHLPQTPETNFRDSSYPFANKESIGSELGNSFASNIRIKEEPLDDEYDKAMAPQQGLLDKIKDEPDNAQEYSHGQQQKTQEGELKISAVFSVSGSPLAPQLTTGFQPSLASSGMNKMLPSVPATAVRVSCSGCKKILQKGQTAYQRKGSTQLFCSTLCLTGYTVPPARPPPPLTKKTCSSCSKDILNPKDVISAQFENTTTSKDFCSQSCLSTYELKKKPIVTINTNSISTKCSMCQKNAVIRHEVNYQNVVHKLCSDACFSKFRSANNLTMNCCENCGGYCYSGSGQCHMLQIEGQSKKFCSSSCITAYKQKSAKITPCALCKSLRSSAEMIENTNSLGKTELFCSVNCLSAYRVKMVTSAGVQVQCNSCKTSAIPQYHLAMSDGSIRNFCSYSCVVAFQNLFNKPTGMNSSVVPLSQGQVIVSIPTGSTVSAGGGSTSAVSPTSISSSAAAGLQRLAAQSQHVGFARSVVKLKCQHCNRLFATKPELLDYKGKMFQFCGKNCSDEYKKINNVMAMCEYCKIEKIVKETVRFSGADKSFCSEGCKLLYKHDLAKRWGNHCKMCSYCLQTSPKLVQNNLGGKVEEFCCEECMSKYTVLFYQMAKCDACKRQGKLSESLKWRGEMKHFCNLLCILMFCNQQSVCDPPSQNNAANISMVQAASAGPPSLRKDSTPVIANVVSLASAPAAQPTVNSNSVLQGAVPTVTAKIIGDASTQTDALKLPPSQPPRLLKNKALLCKPITQTKATSCKPHTQNKECQTEDTPSQPQIIVVPVPVPVFVPIPLHLYTQYAPVPFGIPVPMPVPMLIPSSMDSEDKVTESIEDIKEKLPTHPFEADLLEMAEMIAEDEEKKTLSQGESQTSEHELFLDTKIFEKDQGSTYSGDLESEAVSTPHSWEEELNHYALKSNAVQEADSELKQFSKGETEQDLEADFPSDSFDPLNKGQGIQARSRTRRRHRDGFPQPRRRGRKKSIVAVEPRSLIQGAFQGCSVSGMTLKYMYGVNAWKNWVQWKNAKEEQGDLKCGGVEQASSSPRSDPLGSTQDHALSQESSEPGCRVRSIKLKEDILSCTFAELSLGLCQFIQEVRRPNGEKYDPDSILYLCLGIQQYLFENGRIDNIFTEPYSRFMIELTKLLKIWEPTILPNGYMFSRIEEEHLWECKQLGAYSPIVLLNTLLFFNTKYFQLKNVTEHLKLSFAHVMRRTRTLKYSTKMTYLRFFPPLQKQESEPDKLTVGKRKRNEDDEVPVGVEMAENTDNPLRCPVRLYEFYLSKCSESVKQRNDVFYLQPERSCVPNSPMWYSTFPIDPGTLDTMLTRILMVREVHEELAKAKSEDSDVELSD</sequence>
<protein>
    <recommendedName>
        <fullName>Zinc finger MYM-type protein 4</fullName>
    </recommendedName>
    <alternativeName>
        <fullName>Zinc finger protein 262</fullName>
    </alternativeName>
</protein>
<organism>
    <name type="scientific">Homo sapiens</name>
    <name type="common">Human</name>
    <dbReference type="NCBI Taxonomy" id="9606"/>
    <lineage>
        <taxon>Eukaryota</taxon>
        <taxon>Metazoa</taxon>
        <taxon>Chordata</taxon>
        <taxon>Craniata</taxon>
        <taxon>Vertebrata</taxon>
        <taxon>Euteleostomi</taxon>
        <taxon>Mammalia</taxon>
        <taxon>Eutheria</taxon>
        <taxon>Euarchontoglires</taxon>
        <taxon>Primates</taxon>
        <taxon>Haplorrhini</taxon>
        <taxon>Catarrhini</taxon>
        <taxon>Hominidae</taxon>
        <taxon>Homo</taxon>
    </lineage>
</organism>
<comment type="function">
    <text evidence="4">Plays a role in the regulation of cell morphology and cytoskeletal organization.</text>
</comment>
<comment type="interaction">
    <interactant intactId="EBI-2514659">
        <id>Q5VZL5</id>
    </interactant>
    <interactant intactId="EBI-932887">
        <id>P49711</id>
        <label>CTCF</label>
    </interactant>
    <organismsDiffer>false</organismsDiffer>
    <experiments>3</experiments>
</comment>
<comment type="interaction">
    <interactant intactId="EBI-2514659">
        <id>Q5VZL5</id>
    </interactant>
    <interactant intactId="EBI-701903">
        <id>Q14192</id>
        <label>FHL2</label>
    </interactant>
    <organismsDiffer>false</organismsDiffer>
    <experiments>3</experiments>
</comment>
<comment type="interaction">
    <interactant intactId="EBI-2514659">
        <id>Q5VZL5</id>
    </interactant>
    <interactant intactId="EBI-10172778">
        <id>A1L4F5</id>
        <label>ROR2</label>
    </interactant>
    <organismsDiffer>false</organismsDiffer>
    <experiments>3</experiments>
</comment>
<comment type="interaction">
    <interactant intactId="EBI-2514659">
        <id>Q5VZL5</id>
    </interactant>
    <interactant intactId="EBI-10224192">
        <id>Q06455-4</id>
        <label>RUNX1T1</label>
    </interactant>
    <organismsDiffer>false</organismsDiffer>
    <experiments>3</experiments>
</comment>
<comment type="interaction">
    <interactant intactId="EBI-2514659">
        <id>Q5VZL5</id>
    </interactant>
    <interactant intactId="EBI-741480">
        <id>Q9UMX0</id>
        <label>UBQLN1</label>
    </interactant>
    <organismsDiffer>false</organismsDiffer>
    <experiments>3</experiments>
</comment>
<comment type="interaction">
    <interactant intactId="EBI-2514659">
        <id>Q5VZL5</id>
    </interactant>
    <interactant intactId="EBI-10173939">
        <id>Q9UMX0-2</id>
        <label>UBQLN1</label>
    </interactant>
    <organismsDiffer>false</organismsDiffer>
    <experiments>3</experiments>
</comment>
<comment type="interaction">
    <interactant intactId="EBI-10984536">
        <id>Q5VZL5-4</id>
    </interactant>
    <interactant intactId="EBI-748974">
        <id>Q96CV9</id>
        <label>OPTN</label>
    </interactant>
    <organismsDiffer>false</organismsDiffer>
    <experiments>3</experiments>
</comment>
<comment type="alternative products">
    <event type="alternative splicing"/>
    <isoform>
        <id>Q5VZL5-1</id>
        <name>1</name>
        <sequence type="displayed"/>
    </isoform>
    <isoform>
        <id>Q5VZL5-2</id>
        <name>2</name>
        <sequence type="described" ref="VSP_027514"/>
    </isoform>
    <isoform>
        <id>Q5VZL5-3</id>
        <name>3</name>
        <sequence type="described" ref="VSP_027512"/>
    </isoform>
    <isoform>
        <id>Q5VZL5-4</id>
        <name>4</name>
        <sequence type="described" ref="VSP_027513"/>
    </isoform>
</comment>
<comment type="tissue specificity">
    <text evidence="2">Expressed at higher level in heart, skeletal muscle, kidney and liver.</text>
</comment>
<comment type="miscellaneous">
    <text>The 3'-UTR region of the mRNA encoding this protein contains a motif called CDIR (for cell death inhibiting RNA) that binds HNRPD/AUF1 and HSPB1/HSP27. It is able to inhibit interferon-gamma induced apoptosis.</text>
</comment>
<dbReference type="EMBL" id="AL160000">
    <property type="status" value="NOT_ANNOTATED_CDS"/>
    <property type="molecule type" value="Genomic_DNA"/>
</dbReference>
<dbReference type="EMBL" id="AL356362">
    <property type="status" value="NOT_ANNOTATED_CDS"/>
    <property type="molecule type" value="Genomic_DNA"/>
</dbReference>
<dbReference type="EMBL" id="AL590434">
    <property type="status" value="NOT_ANNOTATED_CDS"/>
    <property type="molecule type" value="Genomic_DNA"/>
</dbReference>
<dbReference type="EMBL" id="CH471059">
    <property type="protein sequence ID" value="EAX07417.1"/>
    <property type="molecule type" value="Genomic_DNA"/>
</dbReference>
<dbReference type="EMBL" id="BC012093">
    <property type="protein sequence ID" value="AAH12093.2"/>
    <property type="molecule type" value="mRNA"/>
</dbReference>
<dbReference type="EMBL" id="BC127113">
    <property type="protein sequence ID" value="AAI27114.1"/>
    <property type="molecule type" value="mRNA"/>
</dbReference>
<dbReference type="EMBL" id="BC127114">
    <property type="protein sequence ID" value="AAI27115.1"/>
    <property type="molecule type" value="mRNA"/>
</dbReference>
<dbReference type="EMBL" id="AB007885">
    <property type="protein sequence ID" value="BAA24855.2"/>
    <property type="molecule type" value="mRNA"/>
</dbReference>
<dbReference type="CCDS" id="CCDS389.1">
    <molecule id="Q5VZL5-1"/>
</dbReference>
<dbReference type="PIR" id="T00059">
    <property type="entry name" value="T00059"/>
</dbReference>
<dbReference type="RefSeq" id="NP_001337067.1">
    <molecule id="Q5VZL5-4"/>
    <property type="nucleotide sequence ID" value="NM_001350138.2"/>
</dbReference>
<dbReference type="RefSeq" id="NP_001337068.1">
    <molecule id="Q5VZL5-3"/>
    <property type="nucleotide sequence ID" value="NM_001350139.2"/>
</dbReference>
<dbReference type="RefSeq" id="NP_001337069.1">
    <molecule id="Q5VZL5-3"/>
    <property type="nucleotide sequence ID" value="NM_001350140.2"/>
</dbReference>
<dbReference type="RefSeq" id="NP_005086.2">
    <molecule id="Q5VZL5-1"/>
    <property type="nucleotide sequence ID" value="NM_005095.2"/>
</dbReference>
<dbReference type="RefSeq" id="XP_005271388.1">
    <molecule id="Q5VZL5-3"/>
    <property type="nucleotide sequence ID" value="XM_005271331.3"/>
</dbReference>
<dbReference type="RefSeq" id="XP_011540725.1">
    <property type="nucleotide sequence ID" value="XM_011542423.2"/>
</dbReference>
<dbReference type="RefSeq" id="XP_011540727.1">
    <property type="nucleotide sequence ID" value="XM_011542425.2"/>
</dbReference>
<dbReference type="RefSeq" id="XP_016858292.1">
    <molecule id="Q5VZL5-4"/>
    <property type="nucleotide sequence ID" value="XM_017002803.2"/>
</dbReference>
<dbReference type="RefSeq" id="XP_016858293.1">
    <property type="nucleotide sequence ID" value="XM_017002804.1"/>
</dbReference>
<dbReference type="RefSeq" id="XP_024306606.1">
    <molecule id="Q5VZL5-3"/>
    <property type="nucleotide sequence ID" value="XM_024450838.2"/>
</dbReference>
<dbReference type="RefSeq" id="XP_047290225.1">
    <molecule id="Q5VZL5-4"/>
    <property type="nucleotide sequence ID" value="XM_047434269.1"/>
</dbReference>
<dbReference type="RefSeq" id="XP_047290226.1">
    <molecule id="Q5VZL5-4"/>
    <property type="nucleotide sequence ID" value="XM_047434270.1"/>
</dbReference>
<dbReference type="RefSeq" id="XP_047290227.1">
    <molecule id="Q5VZL5-4"/>
    <property type="nucleotide sequence ID" value="XM_047434271.1"/>
</dbReference>
<dbReference type="RefSeq" id="XP_047290234.1">
    <molecule id="Q5VZL5-3"/>
    <property type="nucleotide sequence ID" value="XM_047434278.1"/>
</dbReference>
<dbReference type="RefSeq" id="XP_054195577.1">
    <molecule id="Q5VZL5-4"/>
    <property type="nucleotide sequence ID" value="XM_054339602.1"/>
</dbReference>
<dbReference type="RefSeq" id="XP_054195578.1">
    <molecule id="Q5VZL5-4"/>
    <property type="nucleotide sequence ID" value="XM_054339603.1"/>
</dbReference>
<dbReference type="RefSeq" id="XP_054195579.1">
    <molecule id="Q5VZL5-4"/>
    <property type="nucleotide sequence ID" value="XM_054339604.1"/>
</dbReference>
<dbReference type="RefSeq" id="XP_054195580.1">
    <molecule id="Q5VZL5-4"/>
    <property type="nucleotide sequence ID" value="XM_054339605.1"/>
</dbReference>
<dbReference type="RefSeq" id="XP_054195583.1">
    <molecule id="Q5VZL5-3"/>
    <property type="nucleotide sequence ID" value="XM_054339608.1"/>
</dbReference>
<dbReference type="RefSeq" id="XP_054195584.1">
    <molecule id="Q5VZL5-3"/>
    <property type="nucleotide sequence ID" value="XM_054339609.1"/>
</dbReference>
<dbReference type="RefSeq" id="XP_054195585.1">
    <molecule id="Q5VZL5-3"/>
    <property type="nucleotide sequence ID" value="XM_054339610.1"/>
</dbReference>
<dbReference type="SMR" id="Q5VZL5"/>
<dbReference type="BioGRID" id="114636">
    <property type="interactions" value="185"/>
</dbReference>
<dbReference type="FunCoup" id="Q5VZL5">
    <property type="interactions" value="4735"/>
</dbReference>
<dbReference type="IntAct" id="Q5VZL5">
    <property type="interactions" value="148"/>
</dbReference>
<dbReference type="MINT" id="Q5VZL5"/>
<dbReference type="STRING" id="9606.ENSP00000322915"/>
<dbReference type="GlyGen" id="Q5VZL5">
    <property type="glycosylation" value="1 site, 1 O-linked glycan (1 site)"/>
</dbReference>
<dbReference type="iPTMnet" id="Q5VZL5"/>
<dbReference type="PhosphoSitePlus" id="Q5VZL5"/>
<dbReference type="SwissPalm" id="Q5VZL5"/>
<dbReference type="BioMuta" id="ZMYM4"/>
<dbReference type="DMDM" id="74762280"/>
<dbReference type="jPOST" id="Q5VZL5"/>
<dbReference type="MassIVE" id="Q5VZL5"/>
<dbReference type="PaxDb" id="9606-ENSP00000322915"/>
<dbReference type="PeptideAtlas" id="Q5VZL5"/>
<dbReference type="ProteomicsDB" id="65706">
    <molecule id="Q5VZL5-1"/>
</dbReference>
<dbReference type="ProteomicsDB" id="65707">
    <molecule id="Q5VZL5-2"/>
</dbReference>
<dbReference type="ProteomicsDB" id="65708">
    <molecule id="Q5VZL5-3"/>
</dbReference>
<dbReference type="ProteomicsDB" id="65709">
    <molecule id="Q5VZL5-4"/>
</dbReference>
<dbReference type="Pumba" id="Q5VZL5"/>
<dbReference type="Antibodypedia" id="31536">
    <property type="antibodies" value="115 antibodies from 28 providers"/>
</dbReference>
<dbReference type="DNASU" id="9202"/>
<dbReference type="Ensembl" id="ENST00000314607.11">
    <molecule id="Q5VZL5-1"/>
    <property type="protein sequence ID" value="ENSP00000322915.6"/>
    <property type="gene ID" value="ENSG00000146463.12"/>
</dbReference>
<dbReference type="GeneID" id="9202"/>
<dbReference type="KEGG" id="hsa:9202"/>
<dbReference type="MANE-Select" id="ENST00000314607.11">
    <property type="protein sequence ID" value="ENSP00000322915.6"/>
    <property type="RefSeq nucleotide sequence ID" value="NM_005095.3"/>
    <property type="RefSeq protein sequence ID" value="NP_005086.2"/>
</dbReference>
<dbReference type="UCSC" id="uc001byt.3">
    <molecule id="Q5VZL5-1"/>
    <property type="organism name" value="human"/>
</dbReference>
<dbReference type="AGR" id="HGNC:13055"/>
<dbReference type="CTD" id="9202"/>
<dbReference type="DisGeNET" id="9202"/>
<dbReference type="GeneCards" id="ZMYM4"/>
<dbReference type="HGNC" id="HGNC:13055">
    <property type="gene designation" value="ZMYM4"/>
</dbReference>
<dbReference type="HPA" id="ENSG00000146463">
    <property type="expression patterns" value="Low tissue specificity"/>
</dbReference>
<dbReference type="MIM" id="613568">
    <property type="type" value="gene"/>
</dbReference>
<dbReference type="neXtProt" id="NX_Q5VZL5"/>
<dbReference type="OpenTargets" id="ENSG00000146463"/>
<dbReference type="PharmGKB" id="PA37633"/>
<dbReference type="VEuPathDB" id="HostDB:ENSG00000146463"/>
<dbReference type="eggNOG" id="ENOG502QQQ9">
    <property type="taxonomic scope" value="Eukaryota"/>
</dbReference>
<dbReference type="GeneTree" id="ENSGT00940000159550"/>
<dbReference type="InParanoid" id="Q5VZL5"/>
<dbReference type="OMA" id="XNQVEET"/>
<dbReference type="OrthoDB" id="10025028at2759"/>
<dbReference type="PAN-GO" id="Q5VZL5">
    <property type="GO annotations" value="0 GO annotations based on evolutionary models"/>
</dbReference>
<dbReference type="PhylomeDB" id="Q5VZL5"/>
<dbReference type="TreeFam" id="TF336988"/>
<dbReference type="PathwayCommons" id="Q5VZL5"/>
<dbReference type="SignaLink" id="Q5VZL5"/>
<dbReference type="BioGRID-ORCS" id="9202">
    <property type="hits" value="15 hits in 1159 CRISPR screens"/>
</dbReference>
<dbReference type="ChiTaRS" id="ZMYM4">
    <property type="organism name" value="human"/>
</dbReference>
<dbReference type="GenomeRNAi" id="9202"/>
<dbReference type="Pharos" id="Q5VZL5">
    <property type="development level" value="Tbio"/>
</dbReference>
<dbReference type="PRO" id="PR:Q5VZL5"/>
<dbReference type="Proteomes" id="UP000005640">
    <property type="component" value="Chromosome 1"/>
</dbReference>
<dbReference type="RNAct" id="Q5VZL5">
    <property type="molecule type" value="protein"/>
</dbReference>
<dbReference type="Bgee" id="ENSG00000146463">
    <property type="expression patterns" value="Expressed in calcaneal tendon and 210 other cell types or tissues"/>
</dbReference>
<dbReference type="ExpressionAtlas" id="Q5VZL5">
    <property type="expression patterns" value="baseline and differential"/>
</dbReference>
<dbReference type="GO" id="GO:0003677">
    <property type="term" value="F:DNA binding"/>
    <property type="evidence" value="ECO:0000304"/>
    <property type="project" value="ProtInc"/>
</dbReference>
<dbReference type="GO" id="GO:0008270">
    <property type="term" value="F:zinc ion binding"/>
    <property type="evidence" value="ECO:0007669"/>
    <property type="project" value="UniProtKB-KW"/>
</dbReference>
<dbReference type="GO" id="GO:0007010">
    <property type="term" value="P:cytoskeleton organization"/>
    <property type="evidence" value="ECO:0000315"/>
    <property type="project" value="UniProtKB"/>
</dbReference>
<dbReference type="GO" id="GO:0022604">
    <property type="term" value="P:regulation of cell morphogenesis"/>
    <property type="evidence" value="ECO:0000315"/>
    <property type="project" value="UniProtKB"/>
</dbReference>
<dbReference type="InterPro" id="IPR021893">
    <property type="entry name" value="DUF3504"/>
</dbReference>
<dbReference type="InterPro" id="IPR011017">
    <property type="entry name" value="TRASH_dom"/>
</dbReference>
<dbReference type="InterPro" id="IPR010507">
    <property type="entry name" value="Znf_MYM"/>
</dbReference>
<dbReference type="InterPro" id="IPR051284">
    <property type="entry name" value="ZnF_MYMT-QRICH1"/>
</dbReference>
<dbReference type="PANTHER" id="PTHR45736">
    <property type="entry name" value="ZINC FINGER MYM-TYPE PROTEIN"/>
    <property type="match status" value="1"/>
</dbReference>
<dbReference type="PANTHER" id="PTHR45736:SF5">
    <property type="entry name" value="ZINC FINGER MYM-TYPE PROTEIN 4"/>
    <property type="match status" value="1"/>
</dbReference>
<dbReference type="Pfam" id="PF12012">
    <property type="entry name" value="DUF3504"/>
    <property type="match status" value="1"/>
</dbReference>
<dbReference type="Pfam" id="PF24900">
    <property type="entry name" value="TRASH_ZMYM4"/>
    <property type="match status" value="1"/>
</dbReference>
<dbReference type="Pfam" id="PF06467">
    <property type="entry name" value="zf-FCS"/>
    <property type="match status" value="8"/>
</dbReference>
<dbReference type="SMART" id="SM00746">
    <property type="entry name" value="TRASH"/>
    <property type="match status" value="10"/>
</dbReference>
<dbReference type="SUPFAM" id="SSF57716">
    <property type="entry name" value="Glucocorticoid receptor-like (DNA-binding domain)"/>
    <property type="match status" value="1"/>
</dbReference>
<name>ZMYM4_HUMAN</name>
<accession>Q5VZL5</accession>
<accession>A0JP19</accession>
<accession>A0JP20</accession>
<accession>O43308</accession>
<accession>Q5T5E1</accession>
<accession>Q5T5E2</accession>
<accession>Q7L3Q4</accession>
<keyword id="KW-0007">Acetylation</keyword>
<keyword id="KW-0025">Alternative splicing</keyword>
<keyword id="KW-1017">Isopeptide bond</keyword>
<keyword id="KW-0479">Metal-binding</keyword>
<keyword id="KW-0597">Phosphoprotein</keyword>
<keyword id="KW-1267">Proteomics identification</keyword>
<keyword id="KW-1185">Reference proteome</keyword>
<keyword id="KW-0677">Repeat</keyword>
<keyword id="KW-0832">Ubl conjugation</keyword>
<keyword id="KW-0862">Zinc</keyword>
<keyword id="KW-0863">Zinc-finger</keyword>